<dbReference type="EC" id="1.3.5.2" evidence="1"/>
<dbReference type="EMBL" id="CP000572">
    <property type="protein sequence ID" value="ABN90707.1"/>
    <property type="molecule type" value="Genomic_DNA"/>
</dbReference>
<dbReference type="RefSeq" id="WP_004534868.1">
    <property type="nucleotide sequence ID" value="NC_009076.1"/>
</dbReference>
<dbReference type="SMR" id="A3NUS1"/>
<dbReference type="KEGG" id="bpl:BURPS1106A_1825"/>
<dbReference type="HOGENOM" id="CLU_013640_2_0_4"/>
<dbReference type="UniPathway" id="UPA00070">
    <property type="reaction ID" value="UER00946"/>
</dbReference>
<dbReference type="Proteomes" id="UP000006738">
    <property type="component" value="Chromosome I"/>
</dbReference>
<dbReference type="GO" id="GO:0005737">
    <property type="term" value="C:cytoplasm"/>
    <property type="evidence" value="ECO:0007669"/>
    <property type="project" value="InterPro"/>
</dbReference>
<dbReference type="GO" id="GO:0005886">
    <property type="term" value="C:plasma membrane"/>
    <property type="evidence" value="ECO:0007669"/>
    <property type="project" value="UniProtKB-SubCell"/>
</dbReference>
<dbReference type="GO" id="GO:0106430">
    <property type="term" value="F:dihydroorotate dehydrogenase (quinone) activity"/>
    <property type="evidence" value="ECO:0007669"/>
    <property type="project" value="UniProtKB-EC"/>
</dbReference>
<dbReference type="GO" id="GO:0006207">
    <property type="term" value="P:'de novo' pyrimidine nucleobase biosynthetic process"/>
    <property type="evidence" value="ECO:0007669"/>
    <property type="project" value="InterPro"/>
</dbReference>
<dbReference type="GO" id="GO:0044205">
    <property type="term" value="P:'de novo' UMP biosynthetic process"/>
    <property type="evidence" value="ECO:0007669"/>
    <property type="project" value="UniProtKB-UniRule"/>
</dbReference>
<dbReference type="CDD" id="cd04738">
    <property type="entry name" value="DHOD_2_like"/>
    <property type="match status" value="1"/>
</dbReference>
<dbReference type="FunFam" id="3.20.20.70:FF:000028">
    <property type="entry name" value="Dihydroorotate dehydrogenase (quinone)"/>
    <property type="match status" value="1"/>
</dbReference>
<dbReference type="Gene3D" id="3.20.20.70">
    <property type="entry name" value="Aldolase class I"/>
    <property type="match status" value="1"/>
</dbReference>
<dbReference type="HAMAP" id="MF_00225">
    <property type="entry name" value="DHO_dh_type2"/>
    <property type="match status" value="1"/>
</dbReference>
<dbReference type="InterPro" id="IPR013785">
    <property type="entry name" value="Aldolase_TIM"/>
</dbReference>
<dbReference type="InterPro" id="IPR050074">
    <property type="entry name" value="DHO_dehydrogenase"/>
</dbReference>
<dbReference type="InterPro" id="IPR012135">
    <property type="entry name" value="Dihydroorotate_DH_1_2"/>
</dbReference>
<dbReference type="InterPro" id="IPR005719">
    <property type="entry name" value="Dihydroorotate_DH_2"/>
</dbReference>
<dbReference type="InterPro" id="IPR005720">
    <property type="entry name" value="Dihydroorotate_DH_cat"/>
</dbReference>
<dbReference type="InterPro" id="IPR001295">
    <property type="entry name" value="Dihydroorotate_DH_CS"/>
</dbReference>
<dbReference type="NCBIfam" id="NF003644">
    <property type="entry name" value="PRK05286.1-1"/>
    <property type="match status" value="1"/>
</dbReference>
<dbReference type="NCBIfam" id="NF003645">
    <property type="entry name" value="PRK05286.1-2"/>
    <property type="match status" value="1"/>
</dbReference>
<dbReference type="NCBIfam" id="NF003646">
    <property type="entry name" value="PRK05286.1-4"/>
    <property type="match status" value="1"/>
</dbReference>
<dbReference type="NCBIfam" id="NF003652">
    <property type="entry name" value="PRK05286.2-5"/>
    <property type="match status" value="1"/>
</dbReference>
<dbReference type="NCBIfam" id="TIGR01036">
    <property type="entry name" value="pyrD_sub2"/>
    <property type="match status" value="1"/>
</dbReference>
<dbReference type="PANTHER" id="PTHR48109:SF4">
    <property type="entry name" value="DIHYDROOROTATE DEHYDROGENASE (QUINONE), MITOCHONDRIAL"/>
    <property type="match status" value="1"/>
</dbReference>
<dbReference type="PANTHER" id="PTHR48109">
    <property type="entry name" value="DIHYDROOROTATE DEHYDROGENASE (QUINONE), MITOCHONDRIAL-RELATED"/>
    <property type="match status" value="1"/>
</dbReference>
<dbReference type="Pfam" id="PF01180">
    <property type="entry name" value="DHO_dh"/>
    <property type="match status" value="1"/>
</dbReference>
<dbReference type="PIRSF" id="PIRSF000164">
    <property type="entry name" value="DHO_oxidase"/>
    <property type="match status" value="1"/>
</dbReference>
<dbReference type="SUPFAM" id="SSF51395">
    <property type="entry name" value="FMN-linked oxidoreductases"/>
    <property type="match status" value="1"/>
</dbReference>
<dbReference type="PROSITE" id="PS00911">
    <property type="entry name" value="DHODEHASE_1"/>
    <property type="match status" value="1"/>
</dbReference>
<dbReference type="PROSITE" id="PS00912">
    <property type="entry name" value="DHODEHASE_2"/>
    <property type="match status" value="1"/>
</dbReference>
<gene>
    <name evidence="1" type="primary">pyrD</name>
    <name type="ordered locus">BURPS1106A_1825</name>
</gene>
<comment type="function">
    <text evidence="1">Catalyzes the conversion of dihydroorotate to orotate with quinone as electron acceptor.</text>
</comment>
<comment type="catalytic activity">
    <reaction evidence="1">
        <text>(S)-dihydroorotate + a quinone = orotate + a quinol</text>
        <dbReference type="Rhea" id="RHEA:30187"/>
        <dbReference type="ChEBI" id="CHEBI:24646"/>
        <dbReference type="ChEBI" id="CHEBI:30839"/>
        <dbReference type="ChEBI" id="CHEBI:30864"/>
        <dbReference type="ChEBI" id="CHEBI:132124"/>
        <dbReference type="EC" id="1.3.5.2"/>
    </reaction>
</comment>
<comment type="cofactor">
    <cofactor evidence="1">
        <name>FMN</name>
        <dbReference type="ChEBI" id="CHEBI:58210"/>
    </cofactor>
    <text evidence="1">Binds 1 FMN per subunit.</text>
</comment>
<comment type="pathway">
    <text evidence="1">Pyrimidine metabolism; UMP biosynthesis via de novo pathway; orotate from (S)-dihydroorotate (quinone route): step 1/1.</text>
</comment>
<comment type="subunit">
    <text evidence="1">Monomer.</text>
</comment>
<comment type="subcellular location">
    <subcellularLocation>
        <location evidence="1">Cell membrane</location>
        <topology evidence="1">Peripheral membrane protein</topology>
    </subcellularLocation>
</comment>
<comment type="similarity">
    <text evidence="1">Belongs to the dihydroorotate dehydrogenase family. Type 2 subfamily.</text>
</comment>
<name>PYRD_BURP0</name>
<evidence type="ECO:0000255" key="1">
    <source>
        <dbReference type="HAMAP-Rule" id="MF_00225"/>
    </source>
</evidence>
<sequence length="342" mass="36323">MFSSLYPLARASLFKMDAEDAHHLTLRMLGAAGRTGLACALSPRVPDAPRTVMGLSFRNPVGLAAGLDKDGAAIDGFAALGFGFIEVGTVTPRAQPGNPRPRMFRLPEADAIINRMGFNNSGVDQFVKNVQAARYRGVLGLNIGKNADTPIERAADDYLYCLERVYPFASYVTINISSPNTKNLRQLQGAGELDALLAALKDKQRRLADLHGKLVPLALKIAPDLDDEQVKEIAATLLRHDIEGVIATNTTLSREAVKGLPHADEAGGLSGRPVFDASNAVIRKLRAELGDAVPIIGVGGIFSGEDARAKLAAGAALVQLYTGFIYRGPALVAECVKAIARG</sequence>
<feature type="chain" id="PRO_1000024161" description="Dihydroorotate dehydrogenase (quinone)">
    <location>
        <begin position="1"/>
        <end position="342"/>
    </location>
</feature>
<feature type="active site" description="Nucleophile" evidence="1">
    <location>
        <position position="178"/>
    </location>
</feature>
<feature type="binding site" evidence="1">
    <location>
        <begin position="65"/>
        <end position="69"/>
    </location>
    <ligand>
        <name>FMN</name>
        <dbReference type="ChEBI" id="CHEBI:58210"/>
    </ligand>
</feature>
<feature type="binding site" evidence="1">
    <location>
        <position position="69"/>
    </location>
    <ligand>
        <name>substrate</name>
    </ligand>
</feature>
<feature type="binding site" evidence="1">
    <location>
        <position position="89"/>
    </location>
    <ligand>
        <name>FMN</name>
        <dbReference type="ChEBI" id="CHEBI:58210"/>
    </ligand>
</feature>
<feature type="binding site" evidence="1">
    <location>
        <begin position="114"/>
        <end position="118"/>
    </location>
    <ligand>
        <name>substrate</name>
    </ligand>
</feature>
<feature type="binding site" evidence="1">
    <location>
        <position position="142"/>
    </location>
    <ligand>
        <name>FMN</name>
        <dbReference type="ChEBI" id="CHEBI:58210"/>
    </ligand>
</feature>
<feature type="binding site" evidence="1">
    <location>
        <position position="175"/>
    </location>
    <ligand>
        <name>FMN</name>
        <dbReference type="ChEBI" id="CHEBI:58210"/>
    </ligand>
</feature>
<feature type="binding site" evidence="1">
    <location>
        <position position="175"/>
    </location>
    <ligand>
        <name>substrate</name>
    </ligand>
</feature>
<feature type="binding site" evidence="1">
    <location>
        <position position="180"/>
    </location>
    <ligand>
        <name>substrate</name>
    </ligand>
</feature>
<feature type="binding site" evidence="1">
    <location>
        <position position="220"/>
    </location>
    <ligand>
        <name>FMN</name>
        <dbReference type="ChEBI" id="CHEBI:58210"/>
    </ligand>
</feature>
<feature type="binding site" evidence="1">
    <location>
        <position position="248"/>
    </location>
    <ligand>
        <name>FMN</name>
        <dbReference type="ChEBI" id="CHEBI:58210"/>
    </ligand>
</feature>
<feature type="binding site" evidence="1">
    <location>
        <begin position="249"/>
        <end position="250"/>
    </location>
    <ligand>
        <name>substrate</name>
    </ligand>
</feature>
<feature type="binding site" evidence="1">
    <location>
        <position position="271"/>
    </location>
    <ligand>
        <name>FMN</name>
        <dbReference type="ChEBI" id="CHEBI:58210"/>
    </ligand>
</feature>
<feature type="binding site" evidence="1">
    <location>
        <position position="300"/>
    </location>
    <ligand>
        <name>FMN</name>
        <dbReference type="ChEBI" id="CHEBI:58210"/>
    </ligand>
</feature>
<feature type="binding site" evidence="1">
    <location>
        <begin position="321"/>
        <end position="322"/>
    </location>
    <ligand>
        <name>FMN</name>
        <dbReference type="ChEBI" id="CHEBI:58210"/>
    </ligand>
</feature>
<proteinExistence type="inferred from homology"/>
<protein>
    <recommendedName>
        <fullName evidence="1">Dihydroorotate dehydrogenase (quinone)</fullName>
        <ecNumber evidence="1">1.3.5.2</ecNumber>
    </recommendedName>
    <alternativeName>
        <fullName evidence="1">DHOdehase</fullName>
        <shortName evidence="1">DHOD</shortName>
        <shortName evidence="1">DHODase</shortName>
    </alternativeName>
    <alternativeName>
        <fullName evidence="1">Dihydroorotate oxidase</fullName>
    </alternativeName>
</protein>
<reference key="1">
    <citation type="journal article" date="2010" name="Genome Biol. Evol.">
        <title>Continuing evolution of Burkholderia mallei through genome reduction and large-scale rearrangements.</title>
        <authorList>
            <person name="Losada L."/>
            <person name="Ronning C.M."/>
            <person name="DeShazer D."/>
            <person name="Woods D."/>
            <person name="Fedorova N."/>
            <person name="Kim H.S."/>
            <person name="Shabalina S.A."/>
            <person name="Pearson T.R."/>
            <person name="Brinkac L."/>
            <person name="Tan P."/>
            <person name="Nandi T."/>
            <person name="Crabtree J."/>
            <person name="Badger J."/>
            <person name="Beckstrom-Sternberg S."/>
            <person name="Saqib M."/>
            <person name="Schutzer S.E."/>
            <person name="Keim P."/>
            <person name="Nierman W.C."/>
        </authorList>
    </citation>
    <scope>NUCLEOTIDE SEQUENCE [LARGE SCALE GENOMIC DNA]</scope>
    <source>
        <strain>1106a</strain>
    </source>
</reference>
<organism>
    <name type="scientific">Burkholderia pseudomallei (strain 1106a)</name>
    <dbReference type="NCBI Taxonomy" id="357348"/>
    <lineage>
        <taxon>Bacteria</taxon>
        <taxon>Pseudomonadati</taxon>
        <taxon>Pseudomonadota</taxon>
        <taxon>Betaproteobacteria</taxon>
        <taxon>Burkholderiales</taxon>
        <taxon>Burkholderiaceae</taxon>
        <taxon>Burkholderia</taxon>
        <taxon>pseudomallei group</taxon>
    </lineage>
</organism>
<keyword id="KW-1003">Cell membrane</keyword>
<keyword id="KW-0285">Flavoprotein</keyword>
<keyword id="KW-0288">FMN</keyword>
<keyword id="KW-0472">Membrane</keyword>
<keyword id="KW-0560">Oxidoreductase</keyword>
<keyword id="KW-0665">Pyrimidine biosynthesis</keyword>
<accession>A3NUS1</accession>